<proteinExistence type="evidence at transcript level"/>
<name>APL25_ORYSI</name>
<sequence>MWDLNDSPAAEAAPPPLSPSADDSGASSSSAAAVVEIPDDADDDSAAVVVVTRQFFPPAVPGGGGDPAPGNARAGWLRLAGAAPPVAATGPAASAAVSKKSRRGPRSRSSQYRGVTFYRRTGRWESHIWDCGKQVYLGGFDTAHAAARAYDRAAIKFRGVEADINFSLEDYEDDLKQMSNLTKEEFVHVLRRQSTGFPRGSSKYRGVTLHKCGRWEARMGQFLGKKYVYLGLFDTEEEAARAYDRAAIKCNGKDAVTNFDPSIYAGEFEPPAAATGDAAEHNLDLSLGSSAGSKRGNVDGGGDDEITGGGGGGTGSDQRVPMAFDLDWQTAAARSTKAKFDQNSNHPQMPPVLQVTHLPFSPRHHHQFLSNGDPGTAGGLSLTIGAGMAGHWPPQQQQGWGNAGGMSWPLPPHPPPPPTNAAAAATATAAAASSRFPPYIATQASTWLQKNGFHSLTRPT</sequence>
<reference key="1">
    <citation type="journal article" date="2005" name="PLoS Biol.">
        <title>The genomes of Oryza sativa: a history of duplications.</title>
        <authorList>
            <person name="Yu J."/>
            <person name="Wang J."/>
            <person name="Lin W."/>
            <person name="Li S."/>
            <person name="Li H."/>
            <person name="Zhou J."/>
            <person name="Ni P."/>
            <person name="Dong W."/>
            <person name="Hu S."/>
            <person name="Zeng C."/>
            <person name="Zhang J."/>
            <person name="Zhang Y."/>
            <person name="Li R."/>
            <person name="Xu Z."/>
            <person name="Li S."/>
            <person name="Li X."/>
            <person name="Zheng H."/>
            <person name="Cong L."/>
            <person name="Lin L."/>
            <person name="Yin J."/>
            <person name="Geng J."/>
            <person name="Li G."/>
            <person name="Shi J."/>
            <person name="Liu J."/>
            <person name="Lv H."/>
            <person name="Li J."/>
            <person name="Wang J."/>
            <person name="Deng Y."/>
            <person name="Ran L."/>
            <person name="Shi X."/>
            <person name="Wang X."/>
            <person name="Wu Q."/>
            <person name="Li C."/>
            <person name="Ren X."/>
            <person name="Wang J."/>
            <person name="Wang X."/>
            <person name="Li D."/>
            <person name="Liu D."/>
            <person name="Zhang X."/>
            <person name="Ji Z."/>
            <person name="Zhao W."/>
            <person name="Sun Y."/>
            <person name="Zhang Z."/>
            <person name="Bao J."/>
            <person name="Han Y."/>
            <person name="Dong L."/>
            <person name="Ji J."/>
            <person name="Chen P."/>
            <person name="Wu S."/>
            <person name="Liu J."/>
            <person name="Xiao Y."/>
            <person name="Bu D."/>
            <person name="Tan J."/>
            <person name="Yang L."/>
            <person name="Ye C."/>
            <person name="Zhang J."/>
            <person name="Xu J."/>
            <person name="Zhou Y."/>
            <person name="Yu Y."/>
            <person name="Zhang B."/>
            <person name="Zhuang S."/>
            <person name="Wei H."/>
            <person name="Liu B."/>
            <person name="Lei M."/>
            <person name="Yu H."/>
            <person name="Li Y."/>
            <person name="Xu H."/>
            <person name="Wei S."/>
            <person name="He X."/>
            <person name="Fang L."/>
            <person name="Zhang Z."/>
            <person name="Zhang Y."/>
            <person name="Huang X."/>
            <person name="Su Z."/>
            <person name="Tong W."/>
            <person name="Li J."/>
            <person name="Tong Z."/>
            <person name="Li S."/>
            <person name="Ye J."/>
            <person name="Wang L."/>
            <person name="Fang L."/>
            <person name="Lei T."/>
            <person name="Chen C.-S."/>
            <person name="Chen H.-C."/>
            <person name="Xu Z."/>
            <person name="Li H."/>
            <person name="Huang H."/>
            <person name="Zhang F."/>
            <person name="Xu H."/>
            <person name="Li N."/>
            <person name="Zhao C."/>
            <person name="Li S."/>
            <person name="Dong L."/>
            <person name="Huang Y."/>
            <person name="Li L."/>
            <person name="Xi Y."/>
            <person name="Qi Q."/>
            <person name="Li W."/>
            <person name="Zhang B."/>
            <person name="Hu W."/>
            <person name="Zhang Y."/>
            <person name="Tian X."/>
            <person name="Jiao Y."/>
            <person name="Liang X."/>
            <person name="Jin J."/>
            <person name="Gao L."/>
            <person name="Zheng W."/>
            <person name="Hao B."/>
            <person name="Liu S.-M."/>
            <person name="Wang W."/>
            <person name="Yuan L."/>
            <person name="Cao M."/>
            <person name="McDermott J."/>
            <person name="Samudrala R."/>
            <person name="Wang J."/>
            <person name="Wong G.K.-S."/>
            <person name="Yang H."/>
        </authorList>
    </citation>
    <scope>NUCLEOTIDE SEQUENCE [LARGE SCALE GENOMIC DNA]</scope>
    <source>
        <strain>cv. 93-11</strain>
    </source>
</reference>
<reference key="2">
    <citation type="journal article" date="2012" name="Plant Cell">
        <title>Genetic control of seed shattering in rice by the APETALA2 transcription factor shattering abortion1.</title>
        <authorList>
            <person name="Zhou Y."/>
            <person name="Lu D."/>
            <person name="Li C."/>
            <person name="Luo J."/>
            <person name="Zhu B.-F."/>
            <person name="Zhu J."/>
            <person name="Shangguan Y."/>
            <person name="Wang Z."/>
            <person name="Sang T."/>
            <person name="Zhou B."/>
            <person name="Han B."/>
        </authorList>
    </citation>
    <scope>FUNCTION</scope>
    <scope>DISRUPTION PHENOTYPE</scope>
    <scope>TISSUE SPECIFICITY</scope>
    <scope>SUBCELLULAR LOCATION</scope>
    <scope>DEVELOPMENTAL STAGE</scope>
    <source>
        <strain>cv. Guang-Lu-Ai No.4</strain>
    </source>
</reference>
<keyword id="KW-0238">DNA-binding</keyword>
<keyword id="KW-0539">Nucleus</keyword>
<keyword id="KW-1185">Reference proteome</keyword>
<keyword id="KW-0677">Repeat</keyword>
<keyword id="KW-0804">Transcription</keyword>
<keyword id="KW-0805">Transcription regulation</keyword>
<accession>B8AVJ9</accession>
<organism>
    <name type="scientific">Oryza sativa subsp. indica</name>
    <name type="common">Rice</name>
    <dbReference type="NCBI Taxonomy" id="39946"/>
    <lineage>
        <taxon>Eukaryota</taxon>
        <taxon>Viridiplantae</taxon>
        <taxon>Streptophyta</taxon>
        <taxon>Embryophyta</taxon>
        <taxon>Tracheophyta</taxon>
        <taxon>Spermatophyta</taxon>
        <taxon>Magnoliopsida</taxon>
        <taxon>Liliopsida</taxon>
        <taxon>Poales</taxon>
        <taxon>Poaceae</taxon>
        <taxon>BOP clade</taxon>
        <taxon>Oryzoideae</taxon>
        <taxon>Oryzeae</taxon>
        <taxon>Oryzinae</taxon>
        <taxon>Oryza</taxon>
        <taxon>Oryza sativa</taxon>
    </lineage>
</organism>
<dbReference type="EMBL" id="CM000129">
    <property type="protein sequence ID" value="EEC78134.1"/>
    <property type="molecule type" value="Genomic_DNA"/>
</dbReference>
<dbReference type="SMR" id="B8AVJ9"/>
<dbReference type="STRING" id="39946.B8AVJ9"/>
<dbReference type="EnsemblPlants" id="BGIOSGA017250-TA">
    <property type="protein sequence ID" value="BGIOSGA017250-PA"/>
    <property type="gene ID" value="BGIOSGA017250"/>
</dbReference>
<dbReference type="Gramene" id="BGIOSGA017250-TA">
    <property type="protein sequence ID" value="BGIOSGA017250-PA"/>
    <property type="gene ID" value="BGIOSGA017250"/>
</dbReference>
<dbReference type="HOGENOM" id="CLU_035462_4_1_1"/>
<dbReference type="OMA" id="NSNHPQM"/>
<dbReference type="Proteomes" id="UP000007015">
    <property type="component" value="Chromosome 4"/>
</dbReference>
<dbReference type="GO" id="GO:0005634">
    <property type="term" value="C:nucleus"/>
    <property type="evidence" value="ECO:0000314"/>
    <property type="project" value="UniProtKB"/>
</dbReference>
<dbReference type="GO" id="GO:0005667">
    <property type="term" value="C:transcription regulator complex"/>
    <property type="evidence" value="ECO:0000314"/>
    <property type="project" value="UniProtKB"/>
</dbReference>
<dbReference type="GO" id="GO:0003700">
    <property type="term" value="F:DNA-binding transcription factor activity"/>
    <property type="evidence" value="ECO:0000314"/>
    <property type="project" value="UniProtKB"/>
</dbReference>
<dbReference type="GO" id="GO:0000976">
    <property type="term" value="F:transcription cis-regulatory region binding"/>
    <property type="evidence" value="ECO:0000314"/>
    <property type="project" value="UniProtKB"/>
</dbReference>
<dbReference type="GO" id="GO:0060860">
    <property type="term" value="P:regulation of floral organ abscission"/>
    <property type="evidence" value="ECO:0000315"/>
    <property type="project" value="UniProtKB"/>
</dbReference>
<dbReference type="GO" id="GO:0009909">
    <property type="term" value="P:regulation of flower development"/>
    <property type="evidence" value="ECO:0000315"/>
    <property type="project" value="UniProtKB"/>
</dbReference>
<dbReference type="GO" id="GO:0080050">
    <property type="term" value="P:regulation of seed development"/>
    <property type="evidence" value="ECO:0000315"/>
    <property type="project" value="UniProtKB"/>
</dbReference>
<dbReference type="GO" id="GO:0009409">
    <property type="term" value="P:response to cold"/>
    <property type="evidence" value="ECO:0007669"/>
    <property type="project" value="EnsemblPlants"/>
</dbReference>
<dbReference type="GO" id="GO:0097548">
    <property type="term" value="P:seed abscission"/>
    <property type="evidence" value="ECO:0000315"/>
    <property type="project" value="UniProtKB"/>
</dbReference>
<dbReference type="CDD" id="cd00018">
    <property type="entry name" value="AP2"/>
    <property type="match status" value="1"/>
</dbReference>
<dbReference type="FunFam" id="3.30.730.10:FF:000002">
    <property type="entry name" value="AP2-like ethylene-responsive transcription factor"/>
    <property type="match status" value="1"/>
</dbReference>
<dbReference type="FunFam" id="3.30.730.10:FF:000004">
    <property type="entry name" value="AP2-like ethylene-responsive transcription factor"/>
    <property type="match status" value="1"/>
</dbReference>
<dbReference type="Gene3D" id="3.30.730.10">
    <property type="entry name" value="AP2/ERF domain"/>
    <property type="match status" value="2"/>
</dbReference>
<dbReference type="InterPro" id="IPR001471">
    <property type="entry name" value="AP2/ERF_dom"/>
</dbReference>
<dbReference type="InterPro" id="IPR036955">
    <property type="entry name" value="AP2/ERF_dom_sf"/>
</dbReference>
<dbReference type="InterPro" id="IPR016177">
    <property type="entry name" value="DNA-bd_dom_sf"/>
</dbReference>
<dbReference type="PANTHER" id="PTHR32467">
    <property type="entry name" value="AP2-LIKE ETHYLENE-RESPONSIVE TRANSCRIPTION FACTOR"/>
    <property type="match status" value="1"/>
</dbReference>
<dbReference type="PANTHER" id="PTHR32467:SF142">
    <property type="entry name" value="FLORAL HOMEOTIC PROTEIN APETALA 2"/>
    <property type="match status" value="1"/>
</dbReference>
<dbReference type="Pfam" id="PF00847">
    <property type="entry name" value="AP2"/>
    <property type="match status" value="2"/>
</dbReference>
<dbReference type="SMART" id="SM00380">
    <property type="entry name" value="AP2"/>
    <property type="match status" value="2"/>
</dbReference>
<dbReference type="SUPFAM" id="SSF54171">
    <property type="entry name" value="DNA-binding domain"/>
    <property type="match status" value="2"/>
</dbReference>
<dbReference type="PROSITE" id="PS51032">
    <property type="entry name" value="AP2_ERF"/>
    <property type="match status" value="2"/>
</dbReference>
<feature type="chain" id="PRO_0000445996" description="APETALA2-like protein 5">
    <location>
        <begin position="1"/>
        <end position="460"/>
    </location>
</feature>
<feature type="DNA-binding region" description="AP2/ERF 1" evidence="3">
    <location>
        <begin position="111"/>
        <end position="167"/>
    </location>
</feature>
<feature type="DNA-binding region" description="AP2/ERF 2" evidence="3">
    <location>
        <begin position="203"/>
        <end position="260"/>
    </location>
</feature>
<feature type="region of interest" description="Disordered" evidence="4">
    <location>
        <begin position="1"/>
        <end position="39"/>
    </location>
</feature>
<feature type="region of interest" description="Disordered" evidence="4">
    <location>
        <begin position="91"/>
        <end position="111"/>
    </location>
</feature>
<feature type="region of interest" description="Disordered" evidence="4">
    <location>
        <begin position="284"/>
        <end position="320"/>
    </location>
</feature>
<feature type="region of interest" description="Disordered" evidence="4">
    <location>
        <begin position="410"/>
        <end position="429"/>
    </location>
</feature>
<feature type="short sequence motif" description="Nuclear localization signal" evidence="2">
    <location>
        <begin position="99"/>
        <end position="108"/>
    </location>
</feature>
<feature type="short sequence motif" description="EAR" evidence="1">
    <location>
        <begin position="283"/>
        <end position="287"/>
    </location>
</feature>
<feature type="compositionally biased region" description="Low complexity" evidence="4">
    <location>
        <begin position="1"/>
        <end position="12"/>
    </location>
</feature>
<feature type="compositionally biased region" description="Low complexity" evidence="4">
    <location>
        <begin position="19"/>
        <end position="36"/>
    </location>
</feature>
<feature type="compositionally biased region" description="Pro residues" evidence="4">
    <location>
        <begin position="410"/>
        <end position="419"/>
    </location>
</feature>
<feature type="compositionally biased region" description="Low complexity" evidence="4">
    <location>
        <begin position="420"/>
        <end position="429"/>
    </location>
</feature>
<comment type="function">
    <text evidence="5">Transcription factor (PubMed:22408071). Involved in spikelet transition and development (PubMed:22408071). Prevents lemma and palea elongation as well as grain growth (PubMed:22408071). Required for seed shattering through specifying abscission zone (AZ) development (PubMed:22408071).</text>
</comment>
<comment type="subunit">
    <text evidence="1">May form homodimer.</text>
</comment>
<comment type="subcellular location">
    <subcellularLocation>
        <location evidence="3 5">Nucleus</location>
    </subcellularLocation>
</comment>
<comment type="tissue specificity">
    <text evidence="5">Expressed in seedlings, leaves, stems, nodes, sheaths, panicles and young spikelets. Accumulates in the spikelet abscission zone (AZ) via a positive regulation by the transcription factor SH4.</text>
</comment>
<comment type="developmental stage">
    <text evidence="5">In developing panicles, highly expressed in the spikelet abscission zone (AZ) and the inner floral organs of 2 mm long spikelets. Later present at weak levels in the apiculus as well as in the palea and lemma to progressively fades out in 8 mm long spikelets.</text>
</comment>
<comment type="disruption phenotype">
    <text evidence="5">Several spikelet and inflorescence developmental defects, including altered florets palea and lemma structures, abnormal numbers, size, appearance, and identities of floral organs, reduced primary branches number, and longer and fewer grains associated with a loss of grain shattering. Crook-neck-like rachilla between the sterile lemmas and the rudimentary glumes in place of the spikelet abscission zone (AZ).</text>
</comment>
<comment type="similarity">
    <text evidence="6">Belongs to the AP2/ERF transcription factor family. AP2 subfamily.</text>
</comment>
<protein>
    <recommendedName>
        <fullName evidence="6">APETALA2-like protein 5</fullName>
    </recommendedName>
</protein>
<evidence type="ECO:0000250" key="1">
    <source>
        <dbReference type="UniProtKB" id="P47927"/>
    </source>
</evidence>
<evidence type="ECO:0000255" key="2"/>
<evidence type="ECO:0000255" key="3">
    <source>
        <dbReference type="PROSITE-ProRule" id="PRU00366"/>
    </source>
</evidence>
<evidence type="ECO:0000256" key="4">
    <source>
        <dbReference type="SAM" id="MobiDB-lite"/>
    </source>
</evidence>
<evidence type="ECO:0000269" key="5">
    <source>
    </source>
</evidence>
<evidence type="ECO:0000305" key="6"/>
<evidence type="ECO:0000312" key="7">
    <source>
        <dbReference type="EMBL" id="EEC78134.1"/>
    </source>
</evidence>
<gene>
    <name evidence="6" type="primary">AP2-5</name>
    <name evidence="7" type="ORF">OsI_17685</name>
</gene>